<sequence length="593" mass="69788">MKISVGLYGTNAHQIALAMIQGFNKHYTLFRQTSREAKTRFEQADWLGVHKAVKERIRFYDDRVDECVERLRNQFDAASIDDTTWQQVKLLYIGLLLNHKQPELAETFFNSVTTKILHRNYFHNDFIFVRPSISTENIEGDDTQTYRSYYAKEDGLRGTVLKIVKDFDWHRPFVDLEHDVEHVYHAVRHFLNGMPPREVNFQIQVLGSAFYRNKAAYIIGKAINGATEYPFTIPVLQNEAGQLYLDTILLDAWRIGLLFSLSRAYFMVDMEVPSGYVQFLRSILPAKPRSELYIMLGLGKQGKTMFFRDLIYHLHHSEDKFIMAPGIRGLVMLVFTLPSYPYVFKLIKDVFGSSKEMDRATVKKKFMMVKQVDRVGRMADTLEFSNVMFPLKRFNDEVLAELQQLAPSCFEVDGDQLIIKHLYIERRMEPLNIHLDRMERANNVERLEHVIREYGSAIREMAQANIFPGDMLWKNFGVTRFGRVVFYDYDEIEYMTDIKFRQIPPAPDFETEMSGEVWYAVSRNDVFPEEFATFLLTSPQVRKIFIKYHKDLLSPRFWLEAQEKIRSGYVEDFFPYPQELRFINRQTDLTEEQ</sequence>
<name>ACEK_DECAR</name>
<evidence type="ECO:0000255" key="1">
    <source>
        <dbReference type="HAMAP-Rule" id="MF_00747"/>
    </source>
</evidence>
<comment type="function">
    <text evidence="1">Bifunctional enzyme which can phosphorylate or dephosphorylate isocitrate dehydrogenase (IDH) on a specific serine residue. This is a regulatory mechanism which enables bacteria to bypass the Krebs cycle via the glyoxylate shunt in response to the source of carbon. When bacteria are grown on glucose, IDH is fully active and unphosphorylated, but when grown on acetate or ethanol, the activity of IDH declines drastically concomitant with its phosphorylation.</text>
</comment>
<comment type="catalytic activity">
    <reaction evidence="1">
        <text>L-seryl-[isocitrate dehydrogenase] + ATP = O-phospho-L-seryl-[isocitrate dehydrogenase] + ADP + H(+)</text>
        <dbReference type="Rhea" id="RHEA:43540"/>
        <dbReference type="Rhea" id="RHEA-COMP:10605"/>
        <dbReference type="Rhea" id="RHEA-COMP:10606"/>
        <dbReference type="ChEBI" id="CHEBI:15378"/>
        <dbReference type="ChEBI" id="CHEBI:29999"/>
        <dbReference type="ChEBI" id="CHEBI:30616"/>
        <dbReference type="ChEBI" id="CHEBI:83421"/>
        <dbReference type="ChEBI" id="CHEBI:456216"/>
        <dbReference type="EC" id="2.7.11.5"/>
    </reaction>
</comment>
<comment type="subcellular location">
    <subcellularLocation>
        <location evidence="1">Cytoplasm</location>
    </subcellularLocation>
</comment>
<comment type="similarity">
    <text evidence="1">Belongs to the AceK family.</text>
</comment>
<proteinExistence type="inferred from homology"/>
<feature type="chain" id="PRO_0000288286" description="Isocitrate dehydrogenase kinase/phosphatase">
    <location>
        <begin position="1"/>
        <end position="593"/>
    </location>
</feature>
<feature type="active site" evidence="1">
    <location>
        <position position="380"/>
    </location>
</feature>
<feature type="binding site" evidence="1">
    <location>
        <begin position="324"/>
        <end position="330"/>
    </location>
    <ligand>
        <name>ATP</name>
        <dbReference type="ChEBI" id="CHEBI:30616"/>
    </ligand>
</feature>
<feature type="binding site" evidence="1">
    <location>
        <position position="345"/>
    </location>
    <ligand>
        <name>ATP</name>
        <dbReference type="ChEBI" id="CHEBI:30616"/>
    </ligand>
</feature>
<accession>Q47BD0</accession>
<dbReference type="EC" id="2.7.11.5" evidence="1"/>
<dbReference type="EC" id="3.1.3.-" evidence="1"/>
<dbReference type="EMBL" id="CP000089">
    <property type="protein sequence ID" value="AAZ47851.1"/>
    <property type="molecule type" value="Genomic_DNA"/>
</dbReference>
<dbReference type="SMR" id="Q47BD0"/>
<dbReference type="STRING" id="159087.Daro_3121"/>
<dbReference type="KEGG" id="dar:Daro_3121"/>
<dbReference type="eggNOG" id="COG4579">
    <property type="taxonomic scope" value="Bacteria"/>
</dbReference>
<dbReference type="HOGENOM" id="CLU_033804_1_1_4"/>
<dbReference type="OrthoDB" id="5287793at2"/>
<dbReference type="GO" id="GO:0005737">
    <property type="term" value="C:cytoplasm"/>
    <property type="evidence" value="ECO:0007669"/>
    <property type="project" value="UniProtKB-SubCell"/>
</dbReference>
<dbReference type="GO" id="GO:0008772">
    <property type="term" value="F:[isocitrate dehydrogenase (NADP+)] kinase activity"/>
    <property type="evidence" value="ECO:0007669"/>
    <property type="project" value="UniProtKB-UniRule"/>
</dbReference>
<dbReference type="GO" id="GO:0016208">
    <property type="term" value="F:AMP binding"/>
    <property type="evidence" value="ECO:0007669"/>
    <property type="project" value="TreeGrafter"/>
</dbReference>
<dbReference type="GO" id="GO:0005524">
    <property type="term" value="F:ATP binding"/>
    <property type="evidence" value="ECO:0007669"/>
    <property type="project" value="UniProtKB-UniRule"/>
</dbReference>
<dbReference type="GO" id="GO:0004721">
    <property type="term" value="F:phosphoprotein phosphatase activity"/>
    <property type="evidence" value="ECO:0007669"/>
    <property type="project" value="UniProtKB-KW"/>
</dbReference>
<dbReference type="GO" id="GO:0004674">
    <property type="term" value="F:protein serine/threonine kinase activity"/>
    <property type="evidence" value="ECO:0007669"/>
    <property type="project" value="UniProtKB-KW"/>
</dbReference>
<dbReference type="GO" id="GO:0006006">
    <property type="term" value="P:glucose metabolic process"/>
    <property type="evidence" value="ECO:0007669"/>
    <property type="project" value="InterPro"/>
</dbReference>
<dbReference type="GO" id="GO:0006097">
    <property type="term" value="P:glyoxylate cycle"/>
    <property type="evidence" value="ECO:0007669"/>
    <property type="project" value="UniProtKB-UniRule"/>
</dbReference>
<dbReference type="GO" id="GO:0006099">
    <property type="term" value="P:tricarboxylic acid cycle"/>
    <property type="evidence" value="ECO:0007669"/>
    <property type="project" value="UniProtKB-UniRule"/>
</dbReference>
<dbReference type="HAMAP" id="MF_00747">
    <property type="entry name" value="AceK"/>
    <property type="match status" value="1"/>
</dbReference>
<dbReference type="InterPro" id="IPR046855">
    <property type="entry name" value="AceK_kinase"/>
</dbReference>
<dbReference type="InterPro" id="IPR046854">
    <property type="entry name" value="AceK_regulatory"/>
</dbReference>
<dbReference type="InterPro" id="IPR010452">
    <property type="entry name" value="Isocitrate_DH_AceK"/>
</dbReference>
<dbReference type="NCBIfam" id="NF002804">
    <property type="entry name" value="PRK02946.1"/>
    <property type="match status" value="1"/>
</dbReference>
<dbReference type="PANTHER" id="PTHR39559">
    <property type="match status" value="1"/>
</dbReference>
<dbReference type="PANTHER" id="PTHR39559:SF1">
    <property type="entry name" value="ISOCITRATE DEHYDROGENASE KINASE_PHOSPHATASE"/>
    <property type="match status" value="1"/>
</dbReference>
<dbReference type="Pfam" id="PF06315">
    <property type="entry name" value="AceK_kinase"/>
    <property type="match status" value="1"/>
</dbReference>
<dbReference type="Pfam" id="PF20423">
    <property type="entry name" value="AceK_regulatory"/>
    <property type="match status" value="1"/>
</dbReference>
<dbReference type="PIRSF" id="PIRSF000719">
    <property type="entry name" value="AceK"/>
    <property type="match status" value="1"/>
</dbReference>
<gene>
    <name evidence="1" type="primary">aceK</name>
    <name type="ordered locus">Daro_3121</name>
</gene>
<reference key="1">
    <citation type="journal article" date="2009" name="BMC Genomics">
        <title>Metabolic analysis of the soil microbe Dechloromonas aromatica str. RCB: indications of a surprisingly complex life-style and cryptic anaerobic pathways for aromatic degradation.</title>
        <authorList>
            <person name="Salinero K.K."/>
            <person name="Keller K."/>
            <person name="Feil W.S."/>
            <person name="Feil H."/>
            <person name="Trong S."/>
            <person name="Di Bartolo G."/>
            <person name="Lapidus A."/>
        </authorList>
    </citation>
    <scope>NUCLEOTIDE SEQUENCE [LARGE SCALE GENOMIC DNA]</scope>
    <source>
        <strain>RCB</strain>
    </source>
</reference>
<protein>
    <recommendedName>
        <fullName evidence="1">Isocitrate dehydrogenase kinase/phosphatase</fullName>
        <shortName evidence="1">IDH kinase/phosphatase</shortName>
        <shortName evidence="1">IDHK/P</shortName>
        <ecNumber evidence="1">2.7.11.5</ecNumber>
        <ecNumber evidence="1">3.1.3.-</ecNumber>
    </recommendedName>
</protein>
<organism>
    <name type="scientific">Dechloromonas aromatica (strain RCB)</name>
    <dbReference type="NCBI Taxonomy" id="159087"/>
    <lineage>
        <taxon>Bacteria</taxon>
        <taxon>Pseudomonadati</taxon>
        <taxon>Pseudomonadota</taxon>
        <taxon>Betaproteobacteria</taxon>
        <taxon>Rhodocyclales</taxon>
        <taxon>Azonexaceae</taxon>
        <taxon>Dechloromonas</taxon>
    </lineage>
</organism>
<keyword id="KW-0067">ATP-binding</keyword>
<keyword id="KW-0963">Cytoplasm</keyword>
<keyword id="KW-0329">Glyoxylate bypass</keyword>
<keyword id="KW-0378">Hydrolase</keyword>
<keyword id="KW-0418">Kinase</keyword>
<keyword id="KW-0547">Nucleotide-binding</keyword>
<keyword id="KW-0904">Protein phosphatase</keyword>
<keyword id="KW-0723">Serine/threonine-protein kinase</keyword>
<keyword id="KW-0808">Transferase</keyword>
<keyword id="KW-0816">Tricarboxylic acid cycle</keyword>